<protein>
    <recommendedName>
        <fullName evidence="1">Enoyl-[acyl-carrier-protein] reductase [NADH]</fullName>
        <shortName evidence="1">ENR</shortName>
        <ecNumber evidence="1">1.3.1.9</ecNumber>
    </recommendedName>
</protein>
<dbReference type="EC" id="1.3.1.9" evidence="1"/>
<dbReference type="EMBL" id="BX936398">
    <property type="protein sequence ID" value="CAH23188.1"/>
    <property type="molecule type" value="Genomic_DNA"/>
</dbReference>
<dbReference type="RefSeq" id="WP_002215588.1">
    <property type="nucleotide sequence ID" value="NZ_CP009712.1"/>
</dbReference>
<dbReference type="SMR" id="Q663S5"/>
<dbReference type="GeneID" id="57974620"/>
<dbReference type="KEGG" id="ypo:BZ17_2626"/>
<dbReference type="KEGG" id="yps:YPTB3950"/>
<dbReference type="PATRIC" id="fig|273123.14.peg.2752"/>
<dbReference type="UniPathway" id="UPA00094"/>
<dbReference type="Proteomes" id="UP000001011">
    <property type="component" value="Chromosome"/>
</dbReference>
<dbReference type="GO" id="GO:0004318">
    <property type="term" value="F:enoyl-[acyl-carrier-protein] reductase (NADH) activity"/>
    <property type="evidence" value="ECO:0007669"/>
    <property type="project" value="UniProtKB-UniRule"/>
</dbReference>
<dbReference type="GO" id="GO:0051287">
    <property type="term" value="F:NAD binding"/>
    <property type="evidence" value="ECO:0007669"/>
    <property type="project" value="UniProtKB-UniRule"/>
</dbReference>
<dbReference type="GO" id="GO:0050343">
    <property type="term" value="F:trans-2-enoyl-CoA reductase (NADH) activity"/>
    <property type="evidence" value="ECO:0007669"/>
    <property type="project" value="TreeGrafter"/>
</dbReference>
<dbReference type="GO" id="GO:0006633">
    <property type="term" value="P:fatty acid biosynthetic process"/>
    <property type="evidence" value="ECO:0007669"/>
    <property type="project" value="UniProtKB-UniRule"/>
</dbReference>
<dbReference type="FunFam" id="3.40.50.720:FF:000221">
    <property type="entry name" value="Enoyl-[acyl-carrier-protein] reductase [NADH]"/>
    <property type="match status" value="1"/>
</dbReference>
<dbReference type="Gene3D" id="3.40.50.720">
    <property type="entry name" value="NAD(P)-binding Rossmann-like Domain"/>
    <property type="match status" value="1"/>
</dbReference>
<dbReference type="HAMAP" id="MF_01838">
    <property type="entry name" value="FabV_reductase"/>
    <property type="match status" value="1"/>
</dbReference>
<dbReference type="InterPro" id="IPR024906">
    <property type="entry name" value="Eno_Rdtase_FAD-bd_dom"/>
</dbReference>
<dbReference type="InterPro" id="IPR024910">
    <property type="entry name" value="Enoyl-CoA_Rdtase_cat_dom"/>
</dbReference>
<dbReference type="InterPro" id="IPR050048">
    <property type="entry name" value="FabV-like_NADH_b"/>
</dbReference>
<dbReference type="InterPro" id="IPR010758">
    <property type="entry name" value="Trans-2-enoyl-CoA_reductase"/>
</dbReference>
<dbReference type="NCBIfam" id="NF043048">
    <property type="entry name" value="EnoyACPredFabV"/>
    <property type="match status" value="1"/>
</dbReference>
<dbReference type="NCBIfam" id="NF010177">
    <property type="entry name" value="PRK13656.1"/>
    <property type="match status" value="1"/>
</dbReference>
<dbReference type="PANTHER" id="PTHR37480">
    <property type="entry name" value="ENOYL-[ACYL-CARRIER-PROTEIN] REDUCTASE [NADH]"/>
    <property type="match status" value="1"/>
</dbReference>
<dbReference type="PANTHER" id="PTHR37480:SF1">
    <property type="entry name" value="ENOYL-[ACYL-CARRIER-PROTEIN] REDUCTASE [NADH]"/>
    <property type="match status" value="1"/>
</dbReference>
<dbReference type="Pfam" id="PF07055">
    <property type="entry name" value="Eno-Rase_FAD_bd"/>
    <property type="match status" value="1"/>
</dbReference>
<dbReference type="Pfam" id="PF12242">
    <property type="entry name" value="Eno-Rase_NADH_b"/>
    <property type="match status" value="1"/>
</dbReference>
<dbReference type="Pfam" id="PF12241">
    <property type="entry name" value="Enoyl_reductase"/>
    <property type="match status" value="1"/>
</dbReference>
<feature type="chain" id="PRO_0000220064" description="Enoyl-[acyl-carrier-protein] reductase [NADH]">
    <location>
        <begin position="1"/>
        <end position="399"/>
    </location>
</feature>
<feature type="active site" description="Proton donor" evidence="1">
    <location>
        <position position="235"/>
    </location>
</feature>
<feature type="binding site" evidence="1">
    <location>
        <begin position="48"/>
        <end position="53"/>
    </location>
    <ligand>
        <name>NAD(+)</name>
        <dbReference type="ChEBI" id="CHEBI:57540"/>
    </ligand>
</feature>
<feature type="binding site" evidence="1">
    <location>
        <begin position="74"/>
        <end position="75"/>
    </location>
    <ligand>
        <name>NAD(+)</name>
        <dbReference type="ChEBI" id="CHEBI:57540"/>
    </ligand>
</feature>
<feature type="binding site" evidence="1">
    <location>
        <begin position="111"/>
        <end position="112"/>
    </location>
    <ligand>
        <name>NAD(+)</name>
        <dbReference type="ChEBI" id="CHEBI:57540"/>
    </ligand>
</feature>
<feature type="binding site" evidence="1">
    <location>
        <begin position="139"/>
        <end position="140"/>
    </location>
    <ligand>
        <name>NAD(+)</name>
        <dbReference type="ChEBI" id="CHEBI:57540"/>
    </ligand>
</feature>
<feature type="binding site" evidence="1">
    <location>
        <position position="225"/>
    </location>
    <ligand>
        <name>substrate</name>
    </ligand>
</feature>
<feature type="binding site" evidence="1">
    <location>
        <position position="244"/>
    </location>
    <ligand>
        <name>NAD(+)</name>
        <dbReference type="ChEBI" id="CHEBI:57540"/>
    </ligand>
</feature>
<feature type="binding site" evidence="1">
    <location>
        <begin position="274"/>
        <end position="276"/>
    </location>
    <ligand>
        <name>NAD(+)</name>
        <dbReference type="ChEBI" id="CHEBI:57540"/>
    </ligand>
</feature>
<feature type="site" description="Plays an important role in discriminating NADH against NADPH" evidence="1">
    <location>
        <position position="75"/>
    </location>
</feature>
<accession>Q663S5</accession>
<gene>
    <name evidence="1" type="primary">fabV</name>
    <name type="ordered locus">YPTB3950</name>
</gene>
<sequence>MIIKPRVRGFICVTAHPTGCEANVKKQIDYVTTEGPIANGPKRVLVIGASTGYGLAARITAAFGCGADTLGVFFERPGEEGKPGTSGWYNSAAFHKFAAQKGLYAKSINGDAFSDEIKQLTIDAIKQDLGQVDQVIYSLASPRRTHPKTGEVFNSALKPIGNAVNLRGLDTDKEVIKESVLQPATQSEIDSTVAVMGGEDWQMWIDALLDAGVLAEGAQTTAFTYLGEKITHDIYWNGSIGAAKKDLDQKVLAIRESLAAHGGGDARVSVLKAVVTQASSAIPMMPLYLSLLFKVMKEKGTHEGCIEQVYSLYKDSLCGDSPHMDQEGRLRADYKELDPEVQNQVQQLWDQVTNDNIYQLTDFVGYKSEFLNLFGFGIDGVDYDADVNPDVKIPNLIQG</sequence>
<reference key="1">
    <citation type="journal article" date="2004" name="Proc. Natl. Acad. Sci. U.S.A.">
        <title>Insights into the evolution of Yersinia pestis through whole-genome comparison with Yersinia pseudotuberculosis.</title>
        <authorList>
            <person name="Chain P.S.G."/>
            <person name="Carniel E."/>
            <person name="Larimer F.W."/>
            <person name="Lamerdin J."/>
            <person name="Stoutland P.O."/>
            <person name="Regala W.M."/>
            <person name="Georgescu A.M."/>
            <person name="Vergez L.M."/>
            <person name="Land M.L."/>
            <person name="Motin V.L."/>
            <person name="Brubaker R.R."/>
            <person name="Fowler J."/>
            <person name="Hinnebusch J."/>
            <person name="Marceau M."/>
            <person name="Medigue C."/>
            <person name="Simonet M."/>
            <person name="Chenal-Francisque V."/>
            <person name="Souza B."/>
            <person name="Dacheux D."/>
            <person name="Elliott J.M."/>
            <person name="Derbise A."/>
            <person name="Hauser L.J."/>
            <person name="Garcia E."/>
        </authorList>
    </citation>
    <scope>NUCLEOTIDE SEQUENCE [LARGE SCALE GENOMIC DNA]</scope>
    <source>
        <strain>IP32953</strain>
    </source>
</reference>
<name>FABV_YERPS</name>
<proteinExistence type="inferred from homology"/>
<keyword id="KW-0275">Fatty acid biosynthesis</keyword>
<keyword id="KW-0276">Fatty acid metabolism</keyword>
<keyword id="KW-0444">Lipid biosynthesis</keyword>
<keyword id="KW-0443">Lipid metabolism</keyword>
<keyword id="KW-0520">NAD</keyword>
<keyword id="KW-0560">Oxidoreductase</keyword>
<comment type="function">
    <text evidence="1">Involved in the final reduction of the elongation cycle of fatty acid synthesis (FAS II). Catalyzes the reduction of a carbon-carbon double bond in an enoyl moiety that is covalently linked to an acyl carrier protein (ACP).</text>
</comment>
<comment type="catalytic activity">
    <reaction evidence="1">
        <text>a 2,3-saturated acyl-[ACP] + NAD(+) = a (2E)-enoyl-[ACP] + NADH + H(+)</text>
        <dbReference type="Rhea" id="RHEA:10240"/>
        <dbReference type="Rhea" id="RHEA-COMP:9925"/>
        <dbReference type="Rhea" id="RHEA-COMP:9926"/>
        <dbReference type="ChEBI" id="CHEBI:15378"/>
        <dbReference type="ChEBI" id="CHEBI:57540"/>
        <dbReference type="ChEBI" id="CHEBI:57945"/>
        <dbReference type="ChEBI" id="CHEBI:78784"/>
        <dbReference type="ChEBI" id="CHEBI:78785"/>
        <dbReference type="EC" id="1.3.1.9"/>
    </reaction>
</comment>
<comment type="pathway">
    <text evidence="1">Lipid metabolism; fatty acid biosynthesis.</text>
</comment>
<comment type="subunit">
    <text evidence="1">Monomer.</text>
</comment>
<comment type="similarity">
    <text evidence="1">Belongs to the TER reductase family.</text>
</comment>
<evidence type="ECO:0000255" key="1">
    <source>
        <dbReference type="HAMAP-Rule" id="MF_01838"/>
    </source>
</evidence>
<organism>
    <name type="scientific">Yersinia pseudotuberculosis serotype I (strain IP32953)</name>
    <dbReference type="NCBI Taxonomy" id="273123"/>
    <lineage>
        <taxon>Bacteria</taxon>
        <taxon>Pseudomonadati</taxon>
        <taxon>Pseudomonadota</taxon>
        <taxon>Gammaproteobacteria</taxon>
        <taxon>Enterobacterales</taxon>
        <taxon>Yersiniaceae</taxon>
        <taxon>Yersinia</taxon>
    </lineage>
</organism>